<keyword id="KW-0073">Auxin biosynthesis</keyword>
<keyword id="KW-0378">Hydrolase</keyword>
<proteinExistence type="inferred from homology"/>
<feature type="chain" id="PRO_0000105247" description="Indoleacetamide hydrolase">
    <location>
        <begin position="1"/>
        <end position="465"/>
    </location>
</feature>
<feature type="region of interest" description="Disordered" evidence="2">
    <location>
        <begin position="1"/>
        <end position="40"/>
    </location>
</feature>
<feature type="compositionally biased region" description="Basic and acidic residues" evidence="2">
    <location>
        <begin position="9"/>
        <end position="39"/>
    </location>
</feature>
<feature type="active site" description="Charge relay system" evidence="1">
    <location>
        <position position="149"/>
    </location>
</feature>
<feature type="active site" description="Acyl-ester intermediate" evidence="1">
    <location>
        <position position="173"/>
    </location>
</feature>
<evidence type="ECO:0000250" key="1"/>
<evidence type="ECO:0000256" key="2">
    <source>
        <dbReference type="SAM" id="MobiDB-lite"/>
    </source>
</evidence>
<evidence type="ECO:0000305" key="3"/>
<name>HYIN_BRAJP</name>
<organism>
    <name type="scientific">Bradyrhizobium japonicum</name>
    <dbReference type="NCBI Taxonomy" id="375"/>
    <lineage>
        <taxon>Bacteria</taxon>
        <taxon>Pseudomonadati</taxon>
        <taxon>Pseudomonadota</taxon>
        <taxon>Alphaproteobacteria</taxon>
        <taxon>Hyphomicrobiales</taxon>
        <taxon>Nitrobacteraceae</taxon>
        <taxon>Bradyrhizobium</taxon>
    </lineage>
</organism>
<sequence length="465" mass="50266">MVRGRHRSRDPQRRDLRGRDRRSASRTDARRQSAAERGCRRSQRGSAEGCACGRQTGPRAARSACCTACPSRSRRMSTTEGRPNFNGVPANKDFVAPSDSPVVHNLKKAGAIVIGLTNTPEFSFRGFTDNPLHGLTLNPWDPNITCGGSSGGAGSAVAAGIGTIAHGNDIGGSLRWPAHCNGVATIKPTQGRIPAFNGSATAERPMLAHLMSAQGPLARHVGDVRLALDVMSQADPRDPWWVPAPLAGPRPKGPIKVALARIPEDMDVDPSVRAALRQAADHLERSGYRVTEVDVPDIDGVWQTWCDIITNETVVMQEAGMLKVTSEDFHKAWGGMKTKANVLDLKAWMQATAARNGHIRAWQLFFEEYPVVLAPTTVKPTPGPRDDTVSADRVKEIFWGEIRFISAINVLGLPGAVVPVTLHDGKPIGVQLIAGRYREDLALDAAAAIEKRAGVLAHRLWETME</sequence>
<dbReference type="EC" id="3.5.1.-"/>
<dbReference type="EMBL" id="X15117">
    <property type="protein sequence ID" value="CAA33213.1"/>
    <property type="molecule type" value="Genomic_DNA"/>
</dbReference>
<dbReference type="EMBL" id="M24333">
    <property type="protein sequence ID" value="AAA26220.1"/>
    <property type="molecule type" value="Genomic_DNA"/>
</dbReference>
<dbReference type="PIR" id="S05311">
    <property type="entry name" value="S05311"/>
</dbReference>
<dbReference type="SMR" id="P19922"/>
<dbReference type="STRING" id="375.BKD09_RS01245"/>
<dbReference type="eggNOG" id="COG0154">
    <property type="taxonomic scope" value="Bacteria"/>
</dbReference>
<dbReference type="UniPathway" id="UPA00151"/>
<dbReference type="GO" id="GO:0016787">
    <property type="term" value="F:hydrolase activity"/>
    <property type="evidence" value="ECO:0007669"/>
    <property type="project" value="UniProtKB-KW"/>
</dbReference>
<dbReference type="GO" id="GO:0009851">
    <property type="term" value="P:auxin biosynthetic process"/>
    <property type="evidence" value="ECO:0007669"/>
    <property type="project" value="UniProtKB-UniPathway"/>
</dbReference>
<dbReference type="Gene3D" id="3.90.1300.10">
    <property type="entry name" value="Amidase signature (AS) domain"/>
    <property type="match status" value="1"/>
</dbReference>
<dbReference type="InterPro" id="IPR000120">
    <property type="entry name" value="Amidase"/>
</dbReference>
<dbReference type="InterPro" id="IPR020556">
    <property type="entry name" value="Amidase_CS"/>
</dbReference>
<dbReference type="InterPro" id="IPR023631">
    <property type="entry name" value="Amidase_dom"/>
</dbReference>
<dbReference type="InterPro" id="IPR036928">
    <property type="entry name" value="AS_sf"/>
</dbReference>
<dbReference type="NCBIfam" id="NF005687">
    <property type="entry name" value="PRK07487.1"/>
    <property type="match status" value="1"/>
</dbReference>
<dbReference type="PANTHER" id="PTHR11895:SF7">
    <property type="entry name" value="GLUTAMYL-TRNA(GLN) AMIDOTRANSFERASE SUBUNIT A, MITOCHONDRIAL"/>
    <property type="match status" value="1"/>
</dbReference>
<dbReference type="PANTHER" id="PTHR11895">
    <property type="entry name" value="TRANSAMIDASE"/>
    <property type="match status" value="1"/>
</dbReference>
<dbReference type="Pfam" id="PF01425">
    <property type="entry name" value="Amidase"/>
    <property type="match status" value="1"/>
</dbReference>
<dbReference type="SUPFAM" id="SSF75304">
    <property type="entry name" value="Amidase signature (AS) enzymes"/>
    <property type="match status" value="1"/>
</dbReference>
<dbReference type="PROSITE" id="PS00571">
    <property type="entry name" value="AMIDASES"/>
    <property type="match status" value="1"/>
</dbReference>
<protein>
    <recommendedName>
        <fullName>Indoleacetamide hydrolase</fullName>
        <shortName>IAH</shortName>
        <ecNumber>3.5.1.-</ecNumber>
    </recommendedName>
    <alternativeName>
        <fullName>Indole-3-acetamide hydrolase</fullName>
    </alternativeName>
</protein>
<accession>P19922</accession>
<gene>
    <name type="primary">bam</name>
</gene>
<comment type="function">
    <text>Hydrolyzes indole-3-acetamide (IAM) into indole-3-acetic acid (IAA).</text>
</comment>
<comment type="pathway">
    <text>Plant hormone metabolism; auxin biosynthesis.</text>
</comment>
<comment type="similarity">
    <text evidence="3">Belongs to the amidase family.</text>
</comment>
<reference key="1">
    <citation type="journal article" date="1989" name="Nucleic Acids Res.">
        <title>Nucleotide sequence of a gene for indole-3-acetamide hydrolase from Bradyrhizobium japonicum.</title>
        <authorList>
            <person name="Sekine M."/>
            <person name="Watanabe K."/>
            <person name="Syono K."/>
        </authorList>
    </citation>
    <scope>NUCLEOTIDE SEQUENCE [GENOMIC DNA]</scope>
    <source>
        <strain>J1063</strain>
    </source>
</reference>